<feature type="initiator methionine" description="Removed" evidence="2">
    <location>
        <position position="1"/>
    </location>
</feature>
<feature type="chain" id="PRO_0000093954" description="RNA polymerase sigma factor RpoH">
    <location>
        <begin position="2"/>
        <end position="295"/>
    </location>
</feature>
<feature type="DNA-binding region" description="H-T-H motif" evidence="1">
    <location>
        <begin position="254"/>
        <end position="273"/>
    </location>
</feature>
<feature type="region of interest" description="Sigma-70 factor domain-2" evidence="1">
    <location>
        <begin position="52"/>
        <end position="121"/>
    </location>
</feature>
<feature type="region of interest" description="Sigma-70 factor domain-4" evidence="1">
    <location>
        <begin position="230"/>
        <end position="281"/>
    </location>
</feature>
<feature type="short sequence motif" description="Interaction with polymerase core subunit RpoC">
    <location>
        <begin position="76"/>
        <end position="79"/>
    </location>
</feature>
<reference key="1">
    <citation type="journal article" date="1996" name="J. Bacteriol.">
        <title>Isolation, identification, and transcriptional specificity of the heat shock sigma factor sigma32 from Caulobacter crescentus.</title>
        <authorList>
            <person name="Wu J."/>
            <person name="Newton A."/>
        </authorList>
    </citation>
    <scope>NUCLEOTIDE SEQUENCE [GENOMIC DNA]</scope>
    <scope>PROTEIN SEQUENCE OF 2-26</scope>
    <source>
        <strain>ATCC 19089 / CIP 103742 / CB 15</strain>
    </source>
</reference>
<reference key="2">
    <citation type="journal article" date="2001" name="Proc. Natl. Acad. Sci. U.S.A.">
        <title>Complete genome sequence of Caulobacter crescentus.</title>
        <authorList>
            <person name="Nierman W.C."/>
            <person name="Feldblyum T.V."/>
            <person name="Laub M.T."/>
            <person name="Paulsen I.T."/>
            <person name="Nelson K.E."/>
            <person name="Eisen J.A."/>
            <person name="Heidelberg J.F."/>
            <person name="Alley M.R.K."/>
            <person name="Ohta N."/>
            <person name="Maddock J.R."/>
            <person name="Potocka I."/>
            <person name="Nelson W.C."/>
            <person name="Newton A."/>
            <person name="Stephens C."/>
            <person name="Phadke N.D."/>
            <person name="Ely B."/>
            <person name="DeBoy R.T."/>
            <person name="Dodson R.J."/>
            <person name="Durkin A.S."/>
            <person name="Gwinn M.L."/>
            <person name="Haft D.H."/>
            <person name="Kolonay J.F."/>
            <person name="Smit J."/>
            <person name="Craven M.B."/>
            <person name="Khouri H.M."/>
            <person name="Shetty J."/>
            <person name="Berry K.J."/>
            <person name="Utterback T.R."/>
            <person name="Tran K."/>
            <person name="Wolf A.M."/>
            <person name="Vamathevan J.J."/>
            <person name="Ermolaeva M.D."/>
            <person name="White O."/>
            <person name="Salzberg S.L."/>
            <person name="Venter J.C."/>
            <person name="Shapiro L."/>
            <person name="Fraser C.M."/>
        </authorList>
    </citation>
    <scope>NUCLEOTIDE SEQUENCE [LARGE SCALE GENOMIC DNA]</scope>
    <source>
        <strain>ATCC 19089 / CIP 103742 / CB 15</strain>
    </source>
</reference>
<evidence type="ECO:0000255" key="1">
    <source>
        <dbReference type="HAMAP-Rule" id="MF_00961"/>
    </source>
</evidence>
<evidence type="ECO:0000269" key="2">
    <source>
    </source>
</evidence>
<evidence type="ECO:0000305" key="3"/>
<protein>
    <recommendedName>
        <fullName evidence="1">RNA polymerase sigma factor RpoH</fullName>
    </recommendedName>
    <alternativeName>
        <fullName evidence="1">RNA polymerase sigma-32 factor</fullName>
    </alternativeName>
</protein>
<comment type="function">
    <text evidence="1">Sigma factors are initiation factors that promote the attachment of RNA polymerase to specific initiation sites and are then released. This sigma factor is involved in regulation of expression of heat shock genes.</text>
</comment>
<comment type="subunit">
    <text evidence="1">Interacts with the RNA polymerase core enzyme.</text>
</comment>
<comment type="subcellular location">
    <subcellularLocation>
        <location evidence="1">Cytoplasm</location>
    </subcellularLocation>
</comment>
<comment type="similarity">
    <text evidence="1">Belongs to the sigma-70 factor family. RpoH subfamily.</text>
</comment>
<comment type="sequence caution" evidence="3">
    <conflict type="erroneous initiation">
        <sequence resource="EMBL-CDS" id="AAK25060"/>
    </conflict>
</comment>
<accession>P0CAW9</accession>
<accession>P48194</accession>
<accession>Q45995</accession>
<name>RPOH_CAUVC</name>
<organism>
    <name type="scientific">Caulobacter vibrioides (strain ATCC 19089 / CIP 103742 / CB 15)</name>
    <name type="common">Caulobacter crescentus</name>
    <dbReference type="NCBI Taxonomy" id="190650"/>
    <lineage>
        <taxon>Bacteria</taxon>
        <taxon>Pseudomonadati</taxon>
        <taxon>Pseudomonadota</taxon>
        <taxon>Alphaproteobacteria</taxon>
        <taxon>Caulobacterales</taxon>
        <taxon>Caulobacteraceae</taxon>
        <taxon>Caulobacter</taxon>
    </lineage>
</organism>
<dbReference type="EMBL" id="U39791">
    <property type="protein sequence ID" value="AAC43981.1"/>
    <property type="molecule type" value="Genomic_DNA"/>
</dbReference>
<dbReference type="EMBL" id="AE005673">
    <property type="protein sequence ID" value="AAK25060.1"/>
    <property type="status" value="ALT_INIT"/>
    <property type="molecule type" value="Genomic_DNA"/>
</dbReference>
<dbReference type="PIR" id="H87632">
    <property type="entry name" value="H87632"/>
</dbReference>
<dbReference type="RefSeq" id="NP_421892.1">
    <property type="nucleotide sequence ID" value="NC_002696.2"/>
</dbReference>
<dbReference type="RefSeq" id="WP_010920934.1">
    <property type="nucleotide sequence ID" value="NC_002696.2"/>
</dbReference>
<dbReference type="SMR" id="P0CAW9"/>
<dbReference type="STRING" id="190650.CC_3098"/>
<dbReference type="EnsemblBacteria" id="AAK25060">
    <property type="protein sequence ID" value="AAK25060"/>
    <property type="gene ID" value="CC_3098"/>
</dbReference>
<dbReference type="KEGG" id="ccr:CC_3098"/>
<dbReference type="PATRIC" id="fig|190650.5.peg.3105"/>
<dbReference type="eggNOG" id="COG0568">
    <property type="taxonomic scope" value="Bacteria"/>
</dbReference>
<dbReference type="HOGENOM" id="CLU_014793_3_5_5"/>
<dbReference type="Proteomes" id="UP000001816">
    <property type="component" value="Chromosome"/>
</dbReference>
<dbReference type="GO" id="GO:0005737">
    <property type="term" value="C:cytoplasm"/>
    <property type="evidence" value="ECO:0007669"/>
    <property type="project" value="UniProtKB-SubCell"/>
</dbReference>
<dbReference type="GO" id="GO:0003677">
    <property type="term" value="F:DNA binding"/>
    <property type="evidence" value="ECO:0007669"/>
    <property type="project" value="UniProtKB-UniRule"/>
</dbReference>
<dbReference type="GO" id="GO:0016987">
    <property type="term" value="F:sigma factor activity"/>
    <property type="evidence" value="ECO:0007669"/>
    <property type="project" value="UniProtKB-UniRule"/>
</dbReference>
<dbReference type="GO" id="GO:0006352">
    <property type="term" value="P:DNA-templated transcription initiation"/>
    <property type="evidence" value="ECO:0007669"/>
    <property type="project" value="UniProtKB-UniRule"/>
</dbReference>
<dbReference type="GO" id="GO:0009408">
    <property type="term" value="P:response to heat"/>
    <property type="evidence" value="ECO:0007669"/>
    <property type="project" value="UniProtKB-UniRule"/>
</dbReference>
<dbReference type="CDD" id="cd06171">
    <property type="entry name" value="Sigma70_r4"/>
    <property type="match status" value="1"/>
</dbReference>
<dbReference type="Gene3D" id="1.20.140.160">
    <property type="match status" value="1"/>
</dbReference>
<dbReference type="Gene3D" id="1.10.601.10">
    <property type="entry name" value="RNA Polymerase Primary Sigma Factor"/>
    <property type="match status" value="1"/>
</dbReference>
<dbReference type="HAMAP" id="MF_00961">
    <property type="entry name" value="Sigma70_RpoH"/>
    <property type="match status" value="1"/>
</dbReference>
<dbReference type="InterPro" id="IPR014284">
    <property type="entry name" value="RNA_pol_sigma-70_dom"/>
</dbReference>
<dbReference type="InterPro" id="IPR000943">
    <property type="entry name" value="RNA_pol_sigma70"/>
</dbReference>
<dbReference type="InterPro" id="IPR009042">
    <property type="entry name" value="RNA_pol_sigma70_r1_2"/>
</dbReference>
<dbReference type="InterPro" id="IPR007627">
    <property type="entry name" value="RNA_pol_sigma70_r2"/>
</dbReference>
<dbReference type="InterPro" id="IPR007630">
    <property type="entry name" value="RNA_pol_sigma70_r4"/>
</dbReference>
<dbReference type="InterPro" id="IPR013325">
    <property type="entry name" value="RNA_pol_sigma_r2"/>
</dbReference>
<dbReference type="InterPro" id="IPR013324">
    <property type="entry name" value="RNA_pol_sigma_r3/r4-like"/>
</dbReference>
<dbReference type="InterPro" id="IPR012759">
    <property type="entry name" value="RNA_pol_sigma_RpoH_proteobac"/>
</dbReference>
<dbReference type="InterPro" id="IPR050813">
    <property type="entry name" value="Sigma-70_Factor"/>
</dbReference>
<dbReference type="NCBIfam" id="NF005143">
    <property type="entry name" value="PRK06596.1"/>
    <property type="match status" value="1"/>
</dbReference>
<dbReference type="NCBIfam" id="TIGR02392">
    <property type="entry name" value="rpoH_proteo"/>
    <property type="match status" value="1"/>
</dbReference>
<dbReference type="NCBIfam" id="TIGR02937">
    <property type="entry name" value="sigma70-ECF"/>
    <property type="match status" value="1"/>
</dbReference>
<dbReference type="PANTHER" id="PTHR30376:SF3">
    <property type="entry name" value="RNA POLYMERASE SIGMA FACTOR RPOH"/>
    <property type="match status" value="1"/>
</dbReference>
<dbReference type="PANTHER" id="PTHR30376">
    <property type="entry name" value="SIGMA FACTOR RPOH HEAT SHOCK RELATED"/>
    <property type="match status" value="1"/>
</dbReference>
<dbReference type="Pfam" id="PF00140">
    <property type="entry name" value="Sigma70_r1_2"/>
    <property type="match status" value="1"/>
</dbReference>
<dbReference type="Pfam" id="PF04542">
    <property type="entry name" value="Sigma70_r2"/>
    <property type="match status" value="1"/>
</dbReference>
<dbReference type="Pfam" id="PF04545">
    <property type="entry name" value="Sigma70_r4"/>
    <property type="match status" value="1"/>
</dbReference>
<dbReference type="PIRSF" id="PIRSF000770">
    <property type="entry name" value="RNA_pol_sigma-SigE/K"/>
    <property type="match status" value="1"/>
</dbReference>
<dbReference type="PRINTS" id="PR00046">
    <property type="entry name" value="SIGMA70FCT"/>
</dbReference>
<dbReference type="SUPFAM" id="SSF88946">
    <property type="entry name" value="Sigma2 domain of RNA polymerase sigma factors"/>
    <property type="match status" value="1"/>
</dbReference>
<dbReference type="SUPFAM" id="SSF88659">
    <property type="entry name" value="Sigma3 and sigma4 domains of RNA polymerase sigma factors"/>
    <property type="match status" value="1"/>
</dbReference>
<dbReference type="PROSITE" id="PS00715">
    <property type="entry name" value="SIGMA70_1"/>
    <property type="match status" value="1"/>
</dbReference>
<dbReference type="PROSITE" id="PS00716">
    <property type="entry name" value="SIGMA70_2"/>
    <property type="match status" value="1"/>
</dbReference>
<proteinExistence type="evidence at protein level"/>
<sequence>MAVNSLSVMSPDGGLSRYLTEIRKFPMLSKDEEFMLAQRWKEHQDPQAAHKMVTSHLRLVAKIAMGYRGYGLPIGEVISEGNVGLMQAVKKFEPEKGFRLATYAMWWIRASIQEYILRSWSLVKMGTTAAQKKLFFNLRKAKSQIAAFQEGDLHPDQVSQIATKLGVLDSEVISMNRRLSGPDASLNAPLRADGESEWQDWLADEEQVSQETRVAEDEEKSLRMSLLEEAMVELTDRERHILTERRLKDDPTTLEELAAQYGVSRERVRQIEVRAFEKLQKTMREAAIAKNMVDA</sequence>
<keyword id="KW-0963">Cytoplasm</keyword>
<keyword id="KW-0903">Direct protein sequencing</keyword>
<keyword id="KW-0238">DNA-binding</keyword>
<keyword id="KW-1185">Reference proteome</keyword>
<keyword id="KW-0731">Sigma factor</keyword>
<keyword id="KW-0346">Stress response</keyword>
<keyword id="KW-0804">Transcription</keyword>
<keyword id="KW-0805">Transcription regulation</keyword>
<gene>
    <name evidence="1" type="primary">rpoH</name>
    <name type="ordered locus">CC_3098</name>
</gene>